<sequence>MECPNCHKNASRVIDSRPSDENRAIRRRRECENCGFRFTTFERVERSPLLVVKNDGTREAFNRDKILHGVMMAAQKRPISSEQLDALVDHVENEIRKQGLNEISSKDIGNLVMKELANLDDVAYIRFASIYRQFKDVSGFMEAMEDMMAKHDKE</sequence>
<dbReference type="EMBL" id="AE017198">
    <property type="protein sequence ID" value="AAS09421.1"/>
    <property type="molecule type" value="Genomic_DNA"/>
</dbReference>
<dbReference type="RefSeq" id="WP_011162337.1">
    <property type="nucleotide sequence ID" value="NC_005362.1"/>
</dbReference>
<dbReference type="SMR" id="Q74IB7"/>
<dbReference type="GeneID" id="83570846"/>
<dbReference type="KEGG" id="ljo:LJ_1648"/>
<dbReference type="eggNOG" id="COG1327">
    <property type="taxonomic scope" value="Bacteria"/>
</dbReference>
<dbReference type="HOGENOM" id="CLU_108412_0_0_9"/>
<dbReference type="Proteomes" id="UP000000581">
    <property type="component" value="Chromosome"/>
</dbReference>
<dbReference type="GO" id="GO:0005524">
    <property type="term" value="F:ATP binding"/>
    <property type="evidence" value="ECO:0007669"/>
    <property type="project" value="UniProtKB-KW"/>
</dbReference>
<dbReference type="GO" id="GO:0003677">
    <property type="term" value="F:DNA binding"/>
    <property type="evidence" value="ECO:0007669"/>
    <property type="project" value="UniProtKB-KW"/>
</dbReference>
<dbReference type="GO" id="GO:0008270">
    <property type="term" value="F:zinc ion binding"/>
    <property type="evidence" value="ECO:0007669"/>
    <property type="project" value="UniProtKB-UniRule"/>
</dbReference>
<dbReference type="GO" id="GO:0045892">
    <property type="term" value="P:negative regulation of DNA-templated transcription"/>
    <property type="evidence" value="ECO:0007669"/>
    <property type="project" value="UniProtKB-UniRule"/>
</dbReference>
<dbReference type="HAMAP" id="MF_00440">
    <property type="entry name" value="NrdR"/>
    <property type="match status" value="1"/>
</dbReference>
<dbReference type="InterPro" id="IPR005144">
    <property type="entry name" value="ATP-cone_dom"/>
</dbReference>
<dbReference type="InterPro" id="IPR055173">
    <property type="entry name" value="NrdR-like_N"/>
</dbReference>
<dbReference type="InterPro" id="IPR003796">
    <property type="entry name" value="RNR_NrdR-like"/>
</dbReference>
<dbReference type="NCBIfam" id="TIGR00244">
    <property type="entry name" value="transcriptional regulator NrdR"/>
    <property type="match status" value="1"/>
</dbReference>
<dbReference type="PANTHER" id="PTHR30455">
    <property type="entry name" value="TRANSCRIPTIONAL REPRESSOR NRDR"/>
    <property type="match status" value="1"/>
</dbReference>
<dbReference type="PANTHER" id="PTHR30455:SF2">
    <property type="entry name" value="TRANSCRIPTIONAL REPRESSOR NRDR"/>
    <property type="match status" value="1"/>
</dbReference>
<dbReference type="Pfam" id="PF03477">
    <property type="entry name" value="ATP-cone"/>
    <property type="match status" value="1"/>
</dbReference>
<dbReference type="Pfam" id="PF22811">
    <property type="entry name" value="Zn_ribbon_NrdR"/>
    <property type="match status" value="1"/>
</dbReference>
<dbReference type="PROSITE" id="PS51161">
    <property type="entry name" value="ATP_CONE"/>
    <property type="match status" value="1"/>
</dbReference>
<organism>
    <name type="scientific">Lactobacillus johnsonii (strain CNCM I-12250 / La1 / NCC 533)</name>
    <dbReference type="NCBI Taxonomy" id="257314"/>
    <lineage>
        <taxon>Bacteria</taxon>
        <taxon>Bacillati</taxon>
        <taxon>Bacillota</taxon>
        <taxon>Bacilli</taxon>
        <taxon>Lactobacillales</taxon>
        <taxon>Lactobacillaceae</taxon>
        <taxon>Lactobacillus</taxon>
    </lineage>
</organism>
<protein>
    <recommendedName>
        <fullName evidence="1">Transcriptional repressor NrdR</fullName>
    </recommendedName>
</protein>
<accession>Q74IB7</accession>
<name>NRDR_LACJO</name>
<proteinExistence type="inferred from homology"/>
<keyword id="KW-0067">ATP-binding</keyword>
<keyword id="KW-0238">DNA-binding</keyword>
<keyword id="KW-0479">Metal-binding</keyword>
<keyword id="KW-0547">Nucleotide-binding</keyword>
<keyword id="KW-0678">Repressor</keyword>
<keyword id="KW-0804">Transcription</keyword>
<keyword id="KW-0805">Transcription regulation</keyword>
<keyword id="KW-0862">Zinc</keyword>
<keyword id="KW-0863">Zinc-finger</keyword>
<reference key="1">
    <citation type="journal article" date="2004" name="Proc. Natl. Acad. Sci. U.S.A.">
        <title>The genome sequence of the probiotic intestinal bacterium Lactobacillus johnsonii NCC 533.</title>
        <authorList>
            <person name="Pridmore R.D."/>
            <person name="Berger B."/>
            <person name="Desiere F."/>
            <person name="Vilanova D."/>
            <person name="Barretto C."/>
            <person name="Pittet A.-C."/>
            <person name="Zwahlen M.-C."/>
            <person name="Rouvet M."/>
            <person name="Altermann E."/>
            <person name="Barrangou R."/>
            <person name="Mollet B."/>
            <person name="Mercenier A."/>
            <person name="Klaenhammer T."/>
            <person name="Arigoni F."/>
            <person name="Schell M.A."/>
        </authorList>
    </citation>
    <scope>NUCLEOTIDE SEQUENCE [LARGE SCALE GENOMIC DNA]</scope>
    <source>
        <strain>CNCM I-1225 / La1 / NCC 533</strain>
    </source>
</reference>
<comment type="function">
    <text evidence="1">Negatively regulates transcription of bacterial ribonucleotide reductase nrd genes and operons by binding to NrdR-boxes.</text>
</comment>
<comment type="cofactor">
    <cofactor evidence="1">
        <name>Zn(2+)</name>
        <dbReference type="ChEBI" id="CHEBI:29105"/>
    </cofactor>
    <text evidence="1">Binds 1 zinc ion.</text>
</comment>
<comment type="similarity">
    <text evidence="1">Belongs to the NrdR family.</text>
</comment>
<gene>
    <name evidence="1" type="primary">nrdR</name>
    <name type="ordered locus">LJ_1648</name>
</gene>
<evidence type="ECO:0000255" key="1">
    <source>
        <dbReference type="HAMAP-Rule" id="MF_00440"/>
    </source>
</evidence>
<evidence type="ECO:0000256" key="2">
    <source>
        <dbReference type="SAM" id="MobiDB-lite"/>
    </source>
</evidence>
<feature type="chain" id="PRO_0000182306" description="Transcriptional repressor NrdR">
    <location>
        <begin position="1"/>
        <end position="154"/>
    </location>
</feature>
<feature type="domain" description="ATP-cone" evidence="1">
    <location>
        <begin position="49"/>
        <end position="139"/>
    </location>
</feature>
<feature type="zinc finger region" evidence="1">
    <location>
        <begin position="3"/>
        <end position="34"/>
    </location>
</feature>
<feature type="region of interest" description="Disordered" evidence="2">
    <location>
        <begin position="1"/>
        <end position="22"/>
    </location>
</feature>